<sequence>MFTMKKSLLVLFFLGTISLSLCQEERNADEEDGGEATEEEVKRSFLTTFKDLAIKAAKSAGQSVLSTLSCKLSNTC</sequence>
<evidence type="ECO:0000250" key="1">
    <source>
        <dbReference type="UniProtKB" id="P80398"/>
    </source>
</evidence>
<evidence type="ECO:0000255" key="2"/>
<evidence type="ECO:0000269" key="3">
    <source>
    </source>
</evidence>
<evidence type="ECO:0000303" key="4">
    <source>
    </source>
</evidence>
<evidence type="ECO:0000305" key="5">
    <source>
    </source>
</evidence>
<evidence type="ECO:0000312" key="6">
    <source>
        <dbReference type="EMBL" id="BAK08586.1"/>
    </source>
</evidence>
<name>BR2B_ODOIS</name>
<organism evidence="4">
    <name type="scientific">Odorrana ishikawae</name>
    <name type="common">Ishikawa's frog</name>
    <name type="synonym">Rana ishikawae</name>
    <dbReference type="NCBI Taxonomy" id="310659"/>
    <lineage>
        <taxon>Eukaryota</taxon>
        <taxon>Metazoa</taxon>
        <taxon>Chordata</taxon>
        <taxon>Craniata</taxon>
        <taxon>Vertebrata</taxon>
        <taxon>Euteleostomi</taxon>
        <taxon>Amphibia</taxon>
        <taxon>Batrachia</taxon>
        <taxon>Anura</taxon>
        <taxon>Neobatrachia</taxon>
        <taxon>Ranoidea</taxon>
        <taxon>Ranidae</taxon>
        <taxon>Odorrana</taxon>
    </lineage>
</organism>
<reference evidence="6" key="1">
    <citation type="journal article" date="2011" name="Peptides">
        <title>Identification and characterization of antimicrobial peptides from the skin of the endangered frog Odorrana ishikawae.</title>
        <authorList>
            <person name="Iwakoshi-Ukena E."/>
            <person name="Ukena K."/>
            <person name="Okimoto A."/>
            <person name="Soga M."/>
            <person name="Okada G."/>
            <person name="Sano N."/>
            <person name="Fujii T."/>
            <person name="Sugawara Y."/>
            <person name="Sumida M."/>
        </authorList>
    </citation>
    <scope>NUCLEOTIDE SEQUENCE [MRNA]</scope>
    <scope>PROTEIN SEQUENCE OF 44-76</scope>
    <scope>FUNCTION</scope>
    <scope>SYNTHESIS</scope>
    <scope>MASS SPECTROMETRY</scope>
    <source>
        <tissue evidence="4">Skin</tissue>
    </source>
</reference>
<accession>F1T154</accession>
<proteinExistence type="evidence at protein level"/>
<keyword id="KW-0878">Amphibian defense peptide</keyword>
<keyword id="KW-0044">Antibiotic</keyword>
<keyword id="KW-0929">Antimicrobial</keyword>
<keyword id="KW-0165">Cleavage on pair of basic residues</keyword>
<keyword id="KW-0903">Direct protein sequencing</keyword>
<keyword id="KW-1015">Disulfide bond</keyword>
<keyword id="KW-0964">Secreted</keyword>
<keyword id="KW-0732">Signal</keyword>
<dbReference type="EMBL" id="AB602056">
    <property type="protein sequence ID" value="BAK08586.1"/>
    <property type="molecule type" value="mRNA"/>
</dbReference>
<dbReference type="GO" id="GO:0050829">
    <property type="term" value="P:defense response to Gram-negative bacterium"/>
    <property type="evidence" value="ECO:0000314"/>
    <property type="project" value="UniProtKB"/>
</dbReference>
<dbReference type="GO" id="GO:0050830">
    <property type="term" value="P:defense response to Gram-positive bacterium"/>
    <property type="evidence" value="ECO:0000314"/>
    <property type="project" value="UniProtKB"/>
</dbReference>
<dbReference type="InterPro" id="IPR012521">
    <property type="entry name" value="Antimicrobial_frog_2"/>
</dbReference>
<dbReference type="InterPro" id="IPR004275">
    <property type="entry name" value="Frog_antimicrobial_propeptide"/>
</dbReference>
<dbReference type="Pfam" id="PF08023">
    <property type="entry name" value="Antimicrobial_2"/>
    <property type="match status" value="1"/>
</dbReference>
<dbReference type="Pfam" id="PF03032">
    <property type="entry name" value="FSAP_sig_propep"/>
    <property type="match status" value="1"/>
</dbReference>
<protein>
    <recommendedName>
        <fullName evidence="4">Brevinin-2ISb</fullName>
    </recommendedName>
</protein>
<feature type="signal peptide" evidence="2">
    <location>
        <begin position="1"/>
        <end position="22"/>
    </location>
</feature>
<feature type="propeptide" id="PRO_0000439603" description="Removed in mature form" evidence="5">
    <location>
        <begin position="23"/>
        <end position="41"/>
    </location>
</feature>
<feature type="peptide" id="PRO_0000439604" description="Brevinin-2ISb" evidence="3">
    <location>
        <begin position="44"/>
        <end position="76"/>
    </location>
</feature>
<feature type="disulfide bond" evidence="1">
    <location>
        <begin position="70"/>
        <end position="76"/>
    </location>
</feature>
<comment type="function">
    <text evidence="3">Has antimicrobial activity against Gram-negative bacterium E.coli ATCC 8739 (MIC=12.5 ug), against Gram positive bacteria S.aureus ATCC 6538 (MIC=6.3 ug) and B.subtilis ATCC 6633 (MIC=25 ug). Has no activity against methicillin-resistant S.aureus ATCC 43300 (MIC= ug) and fungus C.albicans ATCC 90028.</text>
</comment>
<comment type="subcellular location">
    <subcellularLocation>
        <location evidence="5">Secreted</location>
    </subcellularLocation>
</comment>
<comment type="tissue specificity">
    <text evidence="5">Expressed by the skin glands.</text>
</comment>
<comment type="mass spectrometry"/>
<comment type="similarity">
    <text evidence="2">Belongs to the frog skin active peptide (FSAP) family. Brevinin subfamily.</text>
</comment>